<proteinExistence type="inferred from homology"/>
<feature type="chain" id="PRO_0000227737" description="Histone acetyltransferase type B subunit 2">
    <location>
        <begin position="1"/>
        <end position="435"/>
    </location>
</feature>
<feature type="repeat" description="WD 1">
    <location>
        <begin position="135"/>
        <end position="175"/>
    </location>
</feature>
<feature type="repeat" description="WD 2">
    <location>
        <begin position="188"/>
        <end position="228"/>
    </location>
</feature>
<feature type="repeat" description="WD 3">
    <location>
        <begin position="238"/>
        <end position="278"/>
    </location>
</feature>
<feature type="repeat" description="WD 4">
    <location>
        <begin position="284"/>
        <end position="324"/>
    </location>
</feature>
<feature type="repeat" description="WD 5">
    <location>
        <begin position="328"/>
        <end position="368"/>
    </location>
</feature>
<feature type="repeat" description="WD 6">
    <location>
        <begin position="385"/>
        <end position="425"/>
    </location>
</feature>
<feature type="region of interest" description="Interaction with the histone H4 N-terminus" evidence="2">
    <location>
        <begin position="370"/>
        <end position="374"/>
    </location>
</feature>
<feature type="site" description="Important for interaction with HAT1" evidence="2">
    <location>
        <position position="301"/>
    </location>
</feature>
<name>HAT2_CRYNJ</name>
<reference key="1">
    <citation type="journal article" date="2005" name="Science">
        <title>The genome of the basidiomycetous yeast and human pathogen Cryptococcus neoformans.</title>
        <authorList>
            <person name="Loftus B.J."/>
            <person name="Fung E."/>
            <person name="Roncaglia P."/>
            <person name="Rowley D."/>
            <person name="Amedeo P."/>
            <person name="Bruno D."/>
            <person name="Vamathevan J."/>
            <person name="Miranda M."/>
            <person name="Anderson I.J."/>
            <person name="Fraser J.A."/>
            <person name="Allen J.E."/>
            <person name="Bosdet I.E."/>
            <person name="Brent M.R."/>
            <person name="Chiu R."/>
            <person name="Doering T.L."/>
            <person name="Donlin M.J."/>
            <person name="D'Souza C.A."/>
            <person name="Fox D.S."/>
            <person name="Grinberg V."/>
            <person name="Fu J."/>
            <person name="Fukushima M."/>
            <person name="Haas B.J."/>
            <person name="Huang J.C."/>
            <person name="Janbon G."/>
            <person name="Jones S.J.M."/>
            <person name="Koo H.L."/>
            <person name="Krzywinski M.I."/>
            <person name="Kwon-Chung K.J."/>
            <person name="Lengeler K.B."/>
            <person name="Maiti R."/>
            <person name="Marra M.A."/>
            <person name="Marra R.E."/>
            <person name="Mathewson C.A."/>
            <person name="Mitchell T.G."/>
            <person name="Pertea M."/>
            <person name="Riggs F.R."/>
            <person name="Salzberg S.L."/>
            <person name="Schein J.E."/>
            <person name="Shvartsbeyn A."/>
            <person name="Shin H."/>
            <person name="Shumway M."/>
            <person name="Specht C.A."/>
            <person name="Suh B.B."/>
            <person name="Tenney A."/>
            <person name="Utterback T.R."/>
            <person name="Wickes B.L."/>
            <person name="Wortman J.R."/>
            <person name="Wye N.H."/>
            <person name="Kronstad J.W."/>
            <person name="Lodge J.K."/>
            <person name="Heitman J."/>
            <person name="Davis R.W."/>
            <person name="Fraser C.M."/>
            <person name="Hyman R.W."/>
        </authorList>
    </citation>
    <scope>NUCLEOTIDE SEQUENCE [LARGE SCALE GENOMIC DNA]</scope>
    <source>
        <strain>JEC21 / ATCC MYA-565</strain>
    </source>
</reference>
<protein>
    <recommendedName>
        <fullName>Histone acetyltransferase type B subunit 2</fullName>
    </recommendedName>
</protein>
<sequence>MAHNEPITIDDAGDDFDAVEDNQAINEQYKVWKKNTPFLYDTVITHALTWPSLTCQWLPDITDVPDTDYTSQRLIIGTHTSGQANDHLIIAEVLLPKKGAGISDKALADLYDEEKQEIGSYTASPARIRAIQTINHAGEVNRARYMPQNPELIATKTVTGEVYVFDRTKHESKAPANGECKPDIRLKGQTKEGYGLSWNALKEGHILSASEDTTIGHWDIQGYSKQDPSLQPLRLYTGHSAYVADVEWHPKNENMFGSVSDDGQIMIWDTRSDNTAKASSQVQGHNAEINCISFAPSSEYLFLTGSSDNTIALWDLRKLSTKHHSFEAHTNDVLQLSWSPTSPVHFASASADRRVHIWDLDAIGAEQTPDDAEDGPPELLFVHGGHTSKVCDISWSPSSPWTIASASEDNILQVWEPSRHLRTPYEAEFDEKDLE</sequence>
<comment type="function">
    <text evidence="2">Regulatory subunit of the histone acetylase B (HAT-B) complex. The complex acetylates 'Lys-12' of histone H4 which is required for telomeric silencing.</text>
</comment>
<comment type="subunit">
    <text evidence="2">Component of the HAT-B complex composed of at least HAT1 and HAT2. The HAT-B complex binds to histone H4 tail.</text>
</comment>
<comment type="subcellular location">
    <subcellularLocation>
        <location evidence="1">Cytoplasm</location>
    </subcellularLocation>
    <subcellularLocation>
        <location evidence="1">Nucleus</location>
    </subcellularLocation>
</comment>
<comment type="similarity">
    <text evidence="3">Belongs to the WD repeat RBAP46/RBAP48/MSI1 family.</text>
</comment>
<evidence type="ECO:0000250" key="1"/>
<evidence type="ECO:0000250" key="2">
    <source>
        <dbReference type="UniProtKB" id="P39984"/>
    </source>
</evidence>
<evidence type="ECO:0000305" key="3"/>
<organism>
    <name type="scientific">Cryptococcus neoformans var. neoformans serotype D (strain JEC21 / ATCC MYA-565)</name>
    <name type="common">Filobasidiella neoformans</name>
    <dbReference type="NCBI Taxonomy" id="214684"/>
    <lineage>
        <taxon>Eukaryota</taxon>
        <taxon>Fungi</taxon>
        <taxon>Dikarya</taxon>
        <taxon>Basidiomycota</taxon>
        <taxon>Agaricomycotina</taxon>
        <taxon>Tremellomycetes</taxon>
        <taxon>Tremellales</taxon>
        <taxon>Cryptococcaceae</taxon>
        <taxon>Cryptococcus</taxon>
        <taxon>Cryptococcus neoformans species complex</taxon>
    </lineage>
</organism>
<dbReference type="EMBL" id="AE017347">
    <property type="protein sequence ID" value="AAW44637.1"/>
    <property type="molecule type" value="Genomic_DNA"/>
</dbReference>
<dbReference type="RefSeq" id="XP_571944.1">
    <property type="nucleotide sequence ID" value="XM_571944.1"/>
</dbReference>
<dbReference type="SMR" id="P0CS36"/>
<dbReference type="FunCoup" id="P0CS36">
    <property type="interactions" value="758"/>
</dbReference>
<dbReference type="STRING" id="214684.P0CS36"/>
<dbReference type="PaxDb" id="214684-P0CS36"/>
<dbReference type="EnsemblFungi" id="AAW44637">
    <property type="protein sequence ID" value="AAW44637"/>
    <property type="gene ID" value="CNG02800"/>
</dbReference>
<dbReference type="GeneID" id="3258762"/>
<dbReference type="KEGG" id="cne:CNG02800"/>
<dbReference type="VEuPathDB" id="FungiDB:CNG02800"/>
<dbReference type="eggNOG" id="KOG0264">
    <property type="taxonomic scope" value="Eukaryota"/>
</dbReference>
<dbReference type="HOGENOM" id="CLU_020445_3_1_1"/>
<dbReference type="InParanoid" id="P0CS36"/>
<dbReference type="OMA" id="PHEEGCL"/>
<dbReference type="OrthoDB" id="427795at2759"/>
<dbReference type="Proteomes" id="UP000002149">
    <property type="component" value="Chromosome 7"/>
</dbReference>
<dbReference type="GO" id="GO:0005737">
    <property type="term" value="C:cytoplasm"/>
    <property type="evidence" value="ECO:0000318"/>
    <property type="project" value="GO_Central"/>
</dbReference>
<dbReference type="GO" id="GO:0005634">
    <property type="term" value="C:nucleus"/>
    <property type="evidence" value="ECO:0000318"/>
    <property type="project" value="GO_Central"/>
</dbReference>
<dbReference type="GO" id="GO:0033698">
    <property type="term" value="C:Rpd3L complex"/>
    <property type="evidence" value="ECO:0000318"/>
    <property type="project" value="GO_Central"/>
</dbReference>
<dbReference type="GO" id="GO:0070210">
    <property type="term" value="C:Rpd3L-Expanded complex"/>
    <property type="evidence" value="ECO:0000318"/>
    <property type="project" value="GO_Central"/>
</dbReference>
<dbReference type="GO" id="GO:0042393">
    <property type="term" value="F:histone binding"/>
    <property type="evidence" value="ECO:0000318"/>
    <property type="project" value="GO_Central"/>
</dbReference>
<dbReference type="GO" id="GO:0006338">
    <property type="term" value="P:chromatin remodeling"/>
    <property type="evidence" value="ECO:0000318"/>
    <property type="project" value="GO_Central"/>
</dbReference>
<dbReference type="GO" id="GO:0006355">
    <property type="term" value="P:regulation of DNA-templated transcription"/>
    <property type="evidence" value="ECO:0000318"/>
    <property type="project" value="GO_Central"/>
</dbReference>
<dbReference type="Gene3D" id="2.130.10.10">
    <property type="entry name" value="YVTN repeat-like/Quinoprotein amine dehydrogenase"/>
    <property type="match status" value="1"/>
</dbReference>
<dbReference type="InterPro" id="IPR020472">
    <property type="entry name" value="G-protein_beta_WD-40_rep"/>
</dbReference>
<dbReference type="InterPro" id="IPR022052">
    <property type="entry name" value="Histone-bd_RBBP4-like_N"/>
</dbReference>
<dbReference type="InterPro" id="IPR015943">
    <property type="entry name" value="WD40/YVTN_repeat-like_dom_sf"/>
</dbReference>
<dbReference type="InterPro" id="IPR036322">
    <property type="entry name" value="WD40_repeat_dom_sf"/>
</dbReference>
<dbReference type="InterPro" id="IPR001680">
    <property type="entry name" value="WD40_rpt"/>
</dbReference>
<dbReference type="InterPro" id="IPR050459">
    <property type="entry name" value="WD_repeat_RBAP46/RBAP48/MSI1"/>
</dbReference>
<dbReference type="PANTHER" id="PTHR22850">
    <property type="entry name" value="WD40 REPEAT FAMILY"/>
    <property type="match status" value="1"/>
</dbReference>
<dbReference type="Pfam" id="PF12265">
    <property type="entry name" value="CAF1C_H4-bd"/>
    <property type="match status" value="1"/>
</dbReference>
<dbReference type="Pfam" id="PF00400">
    <property type="entry name" value="WD40"/>
    <property type="match status" value="4"/>
</dbReference>
<dbReference type="PRINTS" id="PR00320">
    <property type="entry name" value="GPROTEINBRPT"/>
</dbReference>
<dbReference type="SMART" id="SM00320">
    <property type="entry name" value="WD40"/>
    <property type="match status" value="6"/>
</dbReference>
<dbReference type="SUPFAM" id="SSF50978">
    <property type="entry name" value="WD40 repeat-like"/>
    <property type="match status" value="1"/>
</dbReference>
<dbReference type="PROSITE" id="PS50082">
    <property type="entry name" value="WD_REPEATS_2"/>
    <property type="match status" value="4"/>
</dbReference>
<dbReference type="PROSITE" id="PS50294">
    <property type="entry name" value="WD_REPEATS_REGION"/>
    <property type="match status" value="1"/>
</dbReference>
<gene>
    <name type="primary">HAT2</name>
    <name type="ordered locus">CNG02800</name>
</gene>
<keyword id="KW-0156">Chromatin regulator</keyword>
<keyword id="KW-0963">Cytoplasm</keyword>
<keyword id="KW-0539">Nucleus</keyword>
<keyword id="KW-1185">Reference proteome</keyword>
<keyword id="KW-0677">Repeat</keyword>
<keyword id="KW-0853">WD repeat</keyword>
<accession>P0CS36</accession>
<accession>Q55PL6</accession>
<accession>Q5KDT9</accession>